<accession>C3P7Q4</accession>
<reference key="1">
    <citation type="submission" date="2009-04" db="EMBL/GenBank/DDBJ databases">
        <title>Genome sequence of Bacillus anthracis A0248.</title>
        <authorList>
            <person name="Dodson R.J."/>
            <person name="Munk A.C."/>
            <person name="Bruce D."/>
            <person name="Detter C."/>
            <person name="Tapia R."/>
            <person name="Sutton G."/>
            <person name="Sims D."/>
            <person name="Brettin T."/>
        </authorList>
    </citation>
    <scope>NUCLEOTIDE SEQUENCE [LARGE SCALE GENOMIC DNA]</scope>
    <source>
        <strain>A0248</strain>
    </source>
</reference>
<sequence length="242" mass="26294">MSGFFITATDTEVGKTVVAGALAGVFRELGYNIGVYKALQSGHVASNPEGDAARLKVLSGVPIKEDEICPYSIEEPLAPRLAMKRAGRAVTLKDIIHHYNERLKEFNSLFVEGAGGLAVPYTEDALVIDFAKELQLPLIVVARPTLGTVNHTVLTIAYAKAHGLTVAGVILSGCKECEMERVQENKVMIEELSGVPVLGLLPFFEGEFTKEEVLESAKEYIMISKLEEFIRNESTVAHTSSN</sequence>
<name>BIOD_BACAA</name>
<feature type="chain" id="PRO_1000133200" description="ATP-dependent dethiobiotin synthetase BioD">
    <location>
        <begin position="1"/>
        <end position="242"/>
    </location>
</feature>
<feature type="active site" evidence="1">
    <location>
        <position position="37"/>
    </location>
</feature>
<feature type="binding site" evidence="1">
    <location>
        <begin position="12"/>
        <end position="17"/>
    </location>
    <ligand>
        <name>ATP</name>
        <dbReference type="ChEBI" id="CHEBI:30616"/>
    </ligand>
</feature>
<feature type="binding site" evidence="1">
    <location>
        <position position="16"/>
    </location>
    <ligand>
        <name>Mg(2+)</name>
        <dbReference type="ChEBI" id="CHEBI:18420"/>
    </ligand>
</feature>
<feature type="binding site" evidence="1">
    <location>
        <position position="41"/>
    </location>
    <ligand>
        <name>substrate</name>
    </ligand>
</feature>
<feature type="binding site" evidence="1">
    <location>
        <position position="51"/>
    </location>
    <ligand>
        <name>ATP</name>
        <dbReference type="ChEBI" id="CHEBI:30616"/>
    </ligand>
</feature>
<feature type="binding site" evidence="1">
    <location>
        <position position="51"/>
    </location>
    <ligand>
        <name>Mg(2+)</name>
        <dbReference type="ChEBI" id="CHEBI:18420"/>
    </ligand>
</feature>
<feature type="binding site" evidence="1">
    <location>
        <begin position="112"/>
        <end position="115"/>
    </location>
    <ligand>
        <name>ATP</name>
        <dbReference type="ChEBI" id="CHEBI:30616"/>
    </ligand>
</feature>
<feature type="binding site" evidence="1">
    <location>
        <position position="112"/>
    </location>
    <ligand>
        <name>Mg(2+)</name>
        <dbReference type="ChEBI" id="CHEBI:18420"/>
    </ligand>
</feature>
<gene>
    <name evidence="1" type="primary">bioD</name>
    <name type="ordered locus">BAA_4362</name>
</gene>
<protein>
    <recommendedName>
        <fullName evidence="1">ATP-dependent dethiobiotin synthetase BioD</fullName>
        <ecNumber evidence="1">6.3.3.3</ecNumber>
    </recommendedName>
    <alternativeName>
        <fullName evidence="1">DTB synthetase</fullName>
        <shortName evidence="1">DTBS</shortName>
    </alternativeName>
    <alternativeName>
        <fullName evidence="1">Dethiobiotin synthase</fullName>
    </alternativeName>
</protein>
<dbReference type="EC" id="6.3.3.3" evidence="1"/>
<dbReference type="EMBL" id="CP001598">
    <property type="protein sequence ID" value="ACQ46659.1"/>
    <property type="molecule type" value="Genomic_DNA"/>
</dbReference>
<dbReference type="RefSeq" id="WP_000012483.1">
    <property type="nucleotide sequence ID" value="NC_012659.1"/>
</dbReference>
<dbReference type="SMR" id="C3P7Q4"/>
<dbReference type="GeneID" id="45024007"/>
<dbReference type="KEGG" id="bai:BAA_4362"/>
<dbReference type="HOGENOM" id="CLU_072551_3_1_9"/>
<dbReference type="UniPathway" id="UPA00078">
    <property type="reaction ID" value="UER00161"/>
</dbReference>
<dbReference type="GO" id="GO:0005829">
    <property type="term" value="C:cytosol"/>
    <property type="evidence" value="ECO:0007669"/>
    <property type="project" value="TreeGrafter"/>
</dbReference>
<dbReference type="GO" id="GO:0005524">
    <property type="term" value="F:ATP binding"/>
    <property type="evidence" value="ECO:0007669"/>
    <property type="project" value="UniProtKB-UniRule"/>
</dbReference>
<dbReference type="GO" id="GO:0004141">
    <property type="term" value="F:dethiobiotin synthase activity"/>
    <property type="evidence" value="ECO:0007669"/>
    <property type="project" value="UniProtKB-UniRule"/>
</dbReference>
<dbReference type="GO" id="GO:0000287">
    <property type="term" value="F:magnesium ion binding"/>
    <property type="evidence" value="ECO:0007669"/>
    <property type="project" value="UniProtKB-UniRule"/>
</dbReference>
<dbReference type="GO" id="GO:0009102">
    <property type="term" value="P:biotin biosynthetic process"/>
    <property type="evidence" value="ECO:0007669"/>
    <property type="project" value="UniProtKB-UniRule"/>
</dbReference>
<dbReference type="CDD" id="cd03109">
    <property type="entry name" value="DTBS"/>
    <property type="match status" value="1"/>
</dbReference>
<dbReference type="FunFam" id="3.40.50.300:FF:001212">
    <property type="entry name" value="ATP-dependent dethiobiotin synthetase BioD"/>
    <property type="match status" value="1"/>
</dbReference>
<dbReference type="Gene3D" id="3.40.50.300">
    <property type="entry name" value="P-loop containing nucleotide triphosphate hydrolases"/>
    <property type="match status" value="1"/>
</dbReference>
<dbReference type="HAMAP" id="MF_00336">
    <property type="entry name" value="BioD"/>
    <property type="match status" value="1"/>
</dbReference>
<dbReference type="InterPro" id="IPR004472">
    <property type="entry name" value="DTB_synth_BioD"/>
</dbReference>
<dbReference type="InterPro" id="IPR027417">
    <property type="entry name" value="P-loop_NTPase"/>
</dbReference>
<dbReference type="NCBIfam" id="TIGR00347">
    <property type="entry name" value="bioD"/>
    <property type="match status" value="1"/>
</dbReference>
<dbReference type="PANTHER" id="PTHR43210:SF2">
    <property type="entry name" value="ATP-DEPENDENT DETHIOBIOTIN SYNTHETASE BIOD 2"/>
    <property type="match status" value="1"/>
</dbReference>
<dbReference type="PANTHER" id="PTHR43210">
    <property type="entry name" value="DETHIOBIOTIN SYNTHETASE"/>
    <property type="match status" value="1"/>
</dbReference>
<dbReference type="Pfam" id="PF13500">
    <property type="entry name" value="AAA_26"/>
    <property type="match status" value="1"/>
</dbReference>
<dbReference type="PIRSF" id="PIRSF006755">
    <property type="entry name" value="DTB_synth"/>
    <property type="match status" value="1"/>
</dbReference>
<dbReference type="SUPFAM" id="SSF52540">
    <property type="entry name" value="P-loop containing nucleoside triphosphate hydrolases"/>
    <property type="match status" value="1"/>
</dbReference>
<proteinExistence type="inferred from homology"/>
<comment type="function">
    <text evidence="1">Catalyzes a mechanistically unusual reaction, the ATP-dependent insertion of CO2 between the N7 and N8 nitrogen atoms of 7,8-diaminopelargonic acid (DAPA, also called 7,8-diammoniononanoate) to form a ureido ring.</text>
</comment>
<comment type="catalytic activity">
    <reaction evidence="1">
        <text>(7R,8S)-7,8-diammoniononanoate + CO2 + ATP = (4R,5S)-dethiobiotin + ADP + phosphate + 3 H(+)</text>
        <dbReference type="Rhea" id="RHEA:15805"/>
        <dbReference type="ChEBI" id="CHEBI:15378"/>
        <dbReference type="ChEBI" id="CHEBI:16526"/>
        <dbReference type="ChEBI" id="CHEBI:30616"/>
        <dbReference type="ChEBI" id="CHEBI:43474"/>
        <dbReference type="ChEBI" id="CHEBI:149469"/>
        <dbReference type="ChEBI" id="CHEBI:149473"/>
        <dbReference type="ChEBI" id="CHEBI:456216"/>
        <dbReference type="EC" id="6.3.3.3"/>
    </reaction>
</comment>
<comment type="cofactor">
    <cofactor evidence="1">
        <name>Mg(2+)</name>
        <dbReference type="ChEBI" id="CHEBI:18420"/>
    </cofactor>
</comment>
<comment type="pathway">
    <text evidence="1">Cofactor biosynthesis; biotin biosynthesis; biotin from 7,8-diaminononanoate: step 1/2.</text>
</comment>
<comment type="subunit">
    <text evidence="1">Homodimer.</text>
</comment>
<comment type="subcellular location">
    <subcellularLocation>
        <location evidence="1">Cytoplasm</location>
    </subcellularLocation>
</comment>
<comment type="similarity">
    <text evidence="1">Belongs to the dethiobiotin synthetase family.</text>
</comment>
<organism>
    <name type="scientific">Bacillus anthracis (strain A0248)</name>
    <dbReference type="NCBI Taxonomy" id="592021"/>
    <lineage>
        <taxon>Bacteria</taxon>
        <taxon>Bacillati</taxon>
        <taxon>Bacillota</taxon>
        <taxon>Bacilli</taxon>
        <taxon>Bacillales</taxon>
        <taxon>Bacillaceae</taxon>
        <taxon>Bacillus</taxon>
        <taxon>Bacillus cereus group</taxon>
    </lineage>
</organism>
<evidence type="ECO:0000255" key="1">
    <source>
        <dbReference type="HAMAP-Rule" id="MF_00336"/>
    </source>
</evidence>
<keyword id="KW-0067">ATP-binding</keyword>
<keyword id="KW-0093">Biotin biosynthesis</keyword>
<keyword id="KW-0963">Cytoplasm</keyword>
<keyword id="KW-0436">Ligase</keyword>
<keyword id="KW-0460">Magnesium</keyword>
<keyword id="KW-0479">Metal-binding</keyword>
<keyword id="KW-0547">Nucleotide-binding</keyword>